<evidence type="ECO:0000255" key="1">
    <source>
        <dbReference type="HAMAP-Rule" id="MF_01080"/>
    </source>
</evidence>
<name>TRUB_WOLPP</name>
<protein>
    <recommendedName>
        <fullName evidence="1">tRNA pseudouridine synthase B</fullName>
        <ecNumber evidence="1">5.4.99.25</ecNumber>
    </recommendedName>
    <alternativeName>
        <fullName evidence="1">tRNA pseudouridine(55) synthase</fullName>
        <shortName evidence="1">Psi55 synthase</shortName>
    </alternativeName>
    <alternativeName>
        <fullName evidence="1">tRNA pseudouridylate synthase</fullName>
    </alternativeName>
    <alternativeName>
        <fullName evidence="1">tRNA-uridine isomerase</fullName>
    </alternativeName>
</protein>
<feature type="chain" id="PRO_1000149836" description="tRNA pseudouridine synthase B">
    <location>
        <begin position="1"/>
        <end position="353"/>
    </location>
</feature>
<feature type="active site" description="Nucleophile" evidence="1">
    <location>
        <position position="39"/>
    </location>
</feature>
<dbReference type="EC" id="5.4.99.25" evidence="1"/>
<dbReference type="EMBL" id="AM999887">
    <property type="protein sequence ID" value="CAQ54937.1"/>
    <property type="molecule type" value="Genomic_DNA"/>
</dbReference>
<dbReference type="RefSeq" id="WP_007302236.1">
    <property type="nucleotide sequence ID" value="NC_010981.1"/>
</dbReference>
<dbReference type="SMR" id="B3CM19"/>
<dbReference type="KEGG" id="wpi:WP0829"/>
<dbReference type="eggNOG" id="COG0130">
    <property type="taxonomic scope" value="Bacteria"/>
</dbReference>
<dbReference type="HOGENOM" id="CLU_032087_0_3_5"/>
<dbReference type="Proteomes" id="UP000008814">
    <property type="component" value="Chromosome"/>
</dbReference>
<dbReference type="GO" id="GO:0003723">
    <property type="term" value="F:RNA binding"/>
    <property type="evidence" value="ECO:0007669"/>
    <property type="project" value="InterPro"/>
</dbReference>
<dbReference type="GO" id="GO:0160148">
    <property type="term" value="F:tRNA pseudouridine(55) synthase activity"/>
    <property type="evidence" value="ECO:0007669"/>
    <property type="project" value="UniProtKB-EC"/>
</dbReference>
<dbReference type="GO" id="GO:1990481">
    <property type="term" value="P:mRNA pseudouridine synthesis"/>
    <property type="evidence" value="ECO:0007669"/>
    <property type="project" value="TreeGrafter"/>
</dbReference>
<dbReference type="GO" id="GO:0031119">
    <property type="term" value="P:tRNA pseudouridine synthesis"/>
    <property type="evidence" value="ECO:0007669"/>
    <property type="project" value="UniProtKB-UniRule"/>
</dbReference>
<dbReference type="CDD" id="cd02573">
    <property type="entry name" value="PseudoU_synth_EcTruB"/>
    <property type="match status" value="1"/>
</dbReference>
<dbReference type="Gene3D" id="3.30.2350.10">
    <property type="entry name" value="Pseudouridine synthase"/>
    <property type="match status" value="1"/>
</dbReference>
<dbReference type="HAMAP" id="MF_01080">
    <property type="entry name" value="TruB_bact"/>
    <property type="match status" value="1"/>
</dbReference>
<dbReference type="InterPro" id="IPR020103">
    <property type="entry name" value="PsdUridine_synth_cat_dom_sf"/>
</dbReference>
<dbReference type="InterPro" id="IPR002501">
    <property type="entry name" value="PsdUridine_synth_N"/>
</dbReference>
<dbReference type="InterPro" id="IPR014780">
    <property type="entry name" value="tRNA_psdUridine_synth_TruB"/>
</dbReference>
<dbReference type="InterPro" id="IPR032819">
    <property type="entry name" value="TruB_C"/>
</dbReference>
<dbReference type="NCBIfam" id="TIGR00431">
    <property type="entry name" value="TruB"/>
    <property type="match status" value="1"/>
</dbReference>
<dbReference type="PANTHER" id="PTHR13767:SF2">
    <property type="entry name" value="PSEUDOURIDYLATE SYNTHASE TRUB1"/>
    <property type="match status" value="1"/>
</dbReference>
<dbReference type="PANTHER" id="PTHR13767">
    <property type="entry name" value="TRNA-PSEUDOURIDINE SYNTHASE"/>
    <property type="match status" value="1"/>
</dbReference>
<dbReference type="Pfam" id="PF16198">
    <property type="entry name" value="TruB_C_2"/>
    <property type="match status" value="1"/>
</dbReference>
<dbReference type="Pfam" id="PF01509">
    <property type="entry name" value="TruB_N"/>
    <property type="match status" value="1"/>
</dbReference>
<dbReference type="SUPFAM" id="SSF55120">
    <property type="entry name" value="Pseudouridine synthase"/>
    <property type="match status" value="1"/>
</dbReference>
<comment type="function">
    <text evidence="1">Responsible for synthesis of pseudouridine from uracil-55 in the psi GC loop of transfer RNAs.</text>
</comment>
<comment type="catalytic activity">
    <reaction evidence="1">
        <text>uridine(55) in tRNA = pseudouridine(55) in tRNA</text>
        <dbReference type="Rhea" id="RHEA:42532"/>
        <dbReference type="Rhea" id="RHEA-COMP:10101"/>
        <dbReference type="Rhea" id="RHEA-COMP:10102"/>
        <dbReference type="ChEBI" id="CHEBI:65314"/>
        <dbReference type="ChEBI" id="CHEBI:65315"/>
        <dbReference type="EC" id="5.4.99.25"/>
    </reaction>
</comment>
<comment type="similarity">
    <text evidence="1">Belongs to the pseudouridine synthase TruB family. Type 1 subfamily.</text>
</comment>
<reference key="1">
    <citation type="journal article" date="2008" name="Mol. Biol. Evol.">
        <title>Genome evolution of Wolbachia strain wPip from the Culex pipiens group.</title>
        <authorList>
            <person name="Klasson L."/>
            <person name="Walker T."/>
            <person name="Sebaihia M."/>
            <person name="Sanders M.J."/>
            <person name="Quail M.A."/>
            <person name="Lord A."/>
            <person name="Sanders S."/>
            <person name="Earl J."/>
            <person name="O'Neill S.L."/>
            <person name="Thomson N."/>
            <person name="Sinkins S.P."/>
            <person name="Parkhill J."/>
        </authorList>
    </citation>
    <scope>NUCLEOTIDE SEQUENCE [LARGE SCALE GENOMIC DNA]</scope>
    <source>
        <strain>wPip</strain>
    </source>
</reference>
<keyword id="KW-0413">Isomerase</keyword>
<keyword id="KW-0819">tRNA processing</keyword>
<organism>
    <name type="scientific">Wolbachia pipientis subsp. Culex pipiens (strain wPip)</name>
    <dbReference type="NCBI Taxonomy" id="570417"/>
    <lineage>
        <taxon>Bacteria</taxon>
        <taxon>Pseudomonadati</taxon>
        <taxon>Pseudomonadota</taxon>
        <taxon>Alphaproteobacteria</taxon>
        <taxon>Rickettsiales</taxon>
        <taxon>Anaplasmataceae</taxon>
        <taxon>Wolbachieae</taxon>
        <taxon>Wolbachia</taxon>
    </lineage>
</organism>
<proteinExistence type="inferred from homology"/>
<sequence>MVNGWLNLDKPTGMSSAQAVTQIKRIFGIKKAGHLGTLDPLASGILPIALGEATKTIPYLSCDLKAYNFTIKWGKQTTTDDLGGDIIRTSDIKPEYNQINCAIKDFIGEITQTPPQFSAVKIKGARAYKLARSGQKVNIKPRQVKIHELKMIFLDTINNIADFSMICGSGVYVRSIARDLGIELNCFGHITQLRRTMVGDFKEDESVTIEQLTKKNTTTYSPQCLTLDTNTYKSCNGQKILGAYVKNNVRDEIGLIPVLDTGMTSEGGMTEDDGGNTKGFIIPIESALKSMFKVEISLEEAEKIRKGQEIILNNLRNLKNYDIFCTIVGNVPIAICSFTHGYVKPIRVFNILK</sequence>
<gene>
    <name evidence="1" type="primary">truB</name>
    <name type="ordered locus">WP0829</name>
</gene>
<accession>B3CM19</accession>